<protein>
    <recommendedName>
        <fullName>Thymidine phosphorylase</fullName>
        <shortName>TP</shortName>
        <ecNumber>2.4.2.4</ecNumber>
    </recommendedName>
    <alternativeName>
        <fullName>TdRPase</fullName>
    </alternativeName>
</protein>
<accession>Q5FVR2</accession>
<feature type="chain" id="PRO_0000319099" description="Thymidine phosphorylase">
    <location>
        <begin position="1"/>
        <end position="476"/>
    </location>
</feature>
<feature type="region of interest" description="Disordered" evidence="2">
    <location>
        <begin position="1"/>
        <end position="26"/>
    </location>
</feature>
<feature type="compositionally biased region" description="Pro residues" evidence="2">
    <location>
        <begin position="1"/>
        <end position="11"/>
    </location>
</feature>
<feature type="modified residue" description="Phosphothreonine" evidence="4">
    <location>
        <position position="6"/>
    </location>
</feature>
<feature type="modified residue" description="Phosphothreonine" evidence="4">
    <location>
        <position position="475"/>
    </location>
</feature>
<keyword id="KW-0328">Glycosyltransferase</keyword>
<keyword id="KW-0597">Phosphoprotein</keyword>
<keyword id="KW-1185">Reference proteome</keyword>
<keyword id="KW-0808">Transferase</keyword>
<sequence>MAAPGTPPPLAPETAGADSGGGSGEHRQLPELIRLKRNGGHLSEADIRNFVHALMDGRAQDTQIGAMLMAIRLQGMDLEETSVLTQALAESGQQLEWPKAWHQQLVDKHSTGGVGDKVSLVLAPALAACGCKVPMISGRSLGHTGGTLDKLESIPGFSVTQSPEQMLQILEEVGCCIVGQSEKLVPADGILYAARDVTATVDSVPLITASILSKKAVEGLSTLVVDVKFGGAAVFPDQEKARELAKMLVRVGMGLGLQVAAALTAMDNPLGRNVGHTLEVEEALLCLDGAGPPDLRDLVIRLGGAILWLSGQAETQDQGAARVAAALDDGSALHRFQLMLSAQGVDPGLARALCSGSPTQRRQLLPHARKQEELLSPADGIVECVRALPLACVLHELGAGRSRAGQPIRPGVGAELLVDVGQWLSRGTPWLRVHLDGPALSSQQRRTLLGALVLSDRAPFKAPSPFAELVLPPTTP</sequence>
<comment type="function">
    <text evidence="1">Catalyzes the reversible phosphorolysis of thymidine. The produced molecules are then utilized as carbon and energy sources or in the rescue of pyrimidine bases for nucleotide synthesis (By similarity).</text>
</comment>
<comment type="catalytic activity">
    <reaction>
        <text>thymidine + phosphate = 2-deoxy-alpha-D-ribose 1-phosphate + thymine</text>
        <dbReference type="Rhea" id="RHEA:16037"/>
        <dbReference type="ChEBI" id="CHEBI:17748"/>
        <dbReference type="ChEBI" id="CHEBI:17821"/>
        <dbReference type="ChEBI" id="CHEBI:43474"/>
        <dbReference type="ChEBI" id="CHEBI:57259"/>
        <dbReference type="EC" id="2.4.2.4"/>
    </reaction>
</comment>
<comment type="pathway">
    <text>Pyrimidine metabolism; dTMP biosynthesis via salvage pathway; dTMP from thymine: step 1/2.</text>
</comment>
<comment type="subunit">
    <text evidence="1">Homodimer.</text>
</comment>
<comment type="similarity">
    <text evidence="3">Belongs to the thymidine/pyrimidine-nucleoside phosphorylase family.</text>
</comment>
<organism>
    <name type="scientific">Rattus norvegicus</name>
    <name type="common">Rat</name>
    <dbReference type="NCBI Taxonomy" id="10116"/>
    <lineage>
        <taxon>Eukaryota</taxon>
        <taxon>Metazoa</taxon>
        <taxon>Chordata</taxon>
        <taxon>Craniata</taxon>
        <taxon>Vertebrata</taxon>
        <taxon>Euteleostomi</taxon>
        <taxon>Mammalia</taxon>
        <taxon>Eutheria</taxon>
        <taxon>Euarchontoglires</taxon>
        <taxon>Glires</taxon>
        <taxon>Rodentia</taxon>
        <taxon>Myomorpha</taxon>
        <taxon>Muroidea</taxon>
        <taxon>Muridae</taxon>
        <taxon>Murinae</taxon>
        <taxon>Rattus</taxon>
    </lineage>
</organism>
<reference key="1">
    <citation type="journal article" date="2004" name="Genome Res.">
        <title>The status, quality, and expansion of the NIH full-length cDNA project: the Mammalian Gene Collection (MGC).</title>
        <authorList>
            <consortium name="The MGC Project Team"/>
        </authorList>
    </citation>
    <scope>NUCLEOTIDE SEQUENCE [LARGE SCALE MRNA]</scope>
    <source>
        <tissue>Liver</tissue>
    </source>
</reference>
<reference key="2">
    <citation type="journal article" date="2012" name="Nat. Commun.">
        <title>Quantitative maps of protein phosphorylation sites across 14 different rat organs and tissues.</title>
        <authorList>
            <person name="Lundby A."/>
            <person name="Secher A."/>
            <person name="Lage K."/>
            <person name="Nordsborg N.B."/>
            <person name="Dmytriyev A."/>
            <person name="Lundby C."/>
            <person name="Olsen J.V."/>
        </authorList>
    </citation>
    <scope>PHOSPHORYLATION [LARGE SCALE ANALYSIS] AT THR-6 AND THR-475</scope>
    <scope>IDENTIFICATION BY MASS SPECTROMETRY [LARGE SCALE ANALYSIS]</scope>
</reference>
<evidence type="ECO:0000250" key="1"/>
<evidence type="ECO:0000256" key="2">
    <source>
        <dbReference type="SAM" id="MobiDB-lite"/>
    </source>
</evidence>
<evidence type="ECO:0000305" key="3"/>
<evidence type="ECO:0007744" key="4">
    <source>
    </source>
</evidence>
<gene>
    <name type="primary">Tymp</name>
    <name type="synonym">Ecgf1</name>
</gene>
<dbReference type="EC" id="2.4.2.4"/>
<dbReference type="EMBL" id="BC089830">
    <property type="protein sequence ID" value="AAH89830.1"/>
    <property type="molecule type" value="mRNA"/>
</dbReference>
<dbReference type="RefSeq" id="NP_001012122.1">
    <property type="nucleotide sequence ID" value="NM_001012122.2"/>
</dbReference>
<dbReference type="SMR" id="Q5FVR2"/>
<dbReference type="FunCoup" id="Q5FVR2">
    <property type="interactions" value="122"/>
</dbReference>
<dbReference type="STRING" id="10116.ENSRNOP00000039935"/>
<dbReference type="BindingDB" id="Q5FVR2"/>
<dbReference type="ChEMBL" id="CHEMBL1075244"/>
<dbReference type="iPTMnet" id="Q5FVR2"/>
<dbReference type="PhosphoSitePlus" id="Q5FVR2"/>
<dbReference type="PaxDb" id="10116-ENSRNOP00000039935"/>
<dbReference type="Ensembl" id="ENSRNOT00000040541.5">
    <property type="protein sequence ID" value="ENSRNOP00000039935.3"/>
    <property type="gene ID" value="ENSRNOG00000032394.6"/>
</dbReference>
<dbReference type="GeneID" id="315219"/>
<dbReference type="KEGG" id="rno:315219"/>
<dbReference type="AGR" id="RGD:1305756"/>
<dbReference type="CTD" id="1890"/>
<dbReference type="RGD" id="1305756">
    <property type="gene designation" value="Tymp"/>
</dbReference>
<dbReference type="eggNOG" id="ENOG502QPRY">
    <property type="taxonomic scope" value="Eukaryota"/>
</dbReference>
<dbReference type="GeneTree" id="ENSGT00390000009250"/>
<dbReference type="HOGENOM" id="CLU_025040_0_2_1"/>
<dbReference type="InParanoid" id="Q5FVR2"/>
<dbReference type="OMA" id="VWGGATN"/>
<dbReference type="OrthoDB" id="76676at2759"/>
<dbReference type="PhylomeDB" id="Q5FVR2"/>
<dbReference type="TreeFam" id="TF332198"/>
<dbReference type="Reactome" id="R-RNO-73614">
    <property type="pathway name" value="Pyrimidine salvage"/>
</dbReference>
<dbReference type="Reactome" id="R-RNO-73621">
    <property type="pathway name" value="Pyrimidine catabolism"/>
</dbReference>
<dbReference type="UniPathway" id="UPA00578">
    <property type="reaction ID" value="UER00638"/>
</dbReference>
<dbReference type="PRO" id="PR:Q5FVR2"/>
<dbReference type="Proteomes" id="UP000002494">
    <property type="component" value="Chromosome 7"/>
</dbReference>
<dbReference type="Bgee" id="ENSRNOG00000032394">
    <property type="expression patterns" value="Expressed in liver and 19 other cell types or tissues"/>
</dbReference>
<dbReference type="GO" id="GO:0005829">
    <property type="term" value="C:cytosol"/>
    <property type="evidence" value="ECO:0000318"/>
    <property type="project" value="GO_Central"/>
</dbReference>
<dbReference type="GO" id="GO:0004645">
    <property type="term" value="F:1,4-alpha-oligoglucan phosphorylase activity"/>
    <property type="evidence" value="ECO:0007669"/>
    <property type="project" value="InterPro"/>
</dbReference>
<dbReference type="GO" id="GO:0042803">
    <property type="term" value="F:protein homodimerization activity"/>
    <property type="evidence" value="ECO:0000266"/>
    <property type="project" value="RGD"/>
</dbReference>
<dbReference type="GO" id="GO:0009032">
    <property type="term" value="F:thymidine phosphorylase activity"/>
    <property type="evidence" value="ECO:0000266"/>
    <property type="project" value="RGD"/>
</dbReference>
<dbReference type="GO" id="GO:0046074">
    <property type="term" value="P:dTMP catabolic process"/>
    <property type="evidence" value="ECO:0000266"/>
    <property type="project" value="RGD"/>
</dbReference>
<dbReference type="GO" id="GO:0000002">
    <property type="term" value="P:mitochondrial genome maintenance"/>
    <property type="evidence" value="ECO:0000266"/>
    <property type="project" value="RGD"/>
</dbReference>
<dbReference type="GO" id="GO:0006206">
    <property type="term" value="P:pyrimidine nucleobase metabolic process"/>
    <property type="evidence" value="ECO:0007669"/>
    <property type="project" value="InterPro"/>
</dbReference>
<dbReference type="GO" id="GO:0006213">
    <property type="term" value="P:pyrimidine nucleoside metabolic process"/>
    <property type="evidence" value="ECO:0000266"/>
    <property type="project" value="RGD"/>
</dbReference>
<dbReference type="GO" id="GO:1905333">
    <property type="term" value="P:regulation of gastric motility"/>
    <property type="evidence" value="ECO:0000266"/>
    <property type="project" value="RGD"/>
</dbReference>
<dbReference type="GO" id="GO:0031641">
    <property type="term" value="P:regulation of myelination"/>
    <property type="evidence" value="ECO:0000266"/>
    <property type="project" value="RGD"/>
</dbReference>
<dbReference type="GO" id="GO:0051969">
    <property type="term" value="P:regulation of transmission of nerve impulse"/>
    <property type="evidence" value="ECO:0000266"/>
    <property type="project" value="RGD"/>
</dbReference>
<dbReference type="FunFam" id="3.40.1030.10:FF:000003">
    <property type="entry name" value="Pyrimidine-nucleoside phosphorylase"/>
    <property type="match status" value="1"/>
</dbReference>
<dbReference type="FunFam" id="1.20.970.10:FF:000011">
    <property type="entry name" value="Thymidine phosphorylase"/>
    <property type="match status" value="1"/>
</dbReference>
<dbReference type="FunFam" id="3.90.1170.30:FF:000003">
    <property type="entry name" value="Thymidine phosphorylase"/>
    <property type="match status" value="1"/>
</dbReference>
<dbReference type="Gene3D" id="3.40.1030.10">
    <property type="entry name" value="Nucleoside phosphorylase/phosphoribosyltransferase catalytic domain"/>
    <property type="match status" value="1"/>
</dbReference>
<dbReference type="Gene3D" id="3.90.1170.30">
    <property type="entry name" value="Pyrimidine nucleoside phosphorylase-like, C-terminal domain"/>
    <property type="match status" value="1"/>
</dbReference>
<dbReference type="Gene3D" id="1.20.970.10">
    <property type="entry name" value="Transferase, Pyrimidine Nucleoside Phosphorylase, Chain C"/>
    <property type="match status" value="1"/>
</dbReference>
<dbReference type="InterPro" id="IPR000312">
    <property type="entry name" value="Glycosyl_Trfase_fam3"/>
</dbReference>
<dbReference type="InterPro" id="IPR017459">
    <property type="entry name" value="Glycosyl_Trfase_fam3_N_dom"/>
</dbReference>
<dbReference type="InterPro" id="IPR036320">
    <property type="entry name" value="Glycosyl_Trfase_fam3_N_dom_sf"/>
</dbReference>
<dbReference type="InterPro" id="IPR035902">
    <property type="entry name" value="Nuc_phospho_transferase"/>
</dbReference>
<dbReference type="InterPro" id="IPR036566">
    <property type="entry name" value="PYNP-like_C_sf"/>
</dbReference>
<dbReference type="InterPro" id="IPR013102">
    <property type="entry name" value="PYNP_C"/>
</dbReference>
<dbReference type="InterPro" id="IPR018090">
    <property type="entry name" value="Pyrmidine_PPas_bac/euk"/>
</dbReference>
<dbReference type="InterPro" id="IPR000053">
    <property type="entry name" value="Thymidine/pyrmidine_PPase"/>
</dbReference>
<dbReference type="NCBIfam" id="NF004490">
    <property type="entry name" value="PRK05820.1"/>
    <property type="match status" value="1"/>
</dbReference>
<dbReference type="NCBIfam" id="TIGR02644">
    <property type="entry name" value="Y_phosphoryl"/>
    <property type="match status" value="1"/>
</dbReference>
<dbReference type="PANTHER" id="PTHR10515">
    <property type="entry name" value="THYMIDINE PHOSPHORYLASE"/>
    <property type="match status" value="1"/>
</dbReference>
<dbReference type="PANTHER" id="PTHR10515:SF0">
    <property type="entry name" value="THYMIDINE PHOSPHORYLASE"/>
    <property type="match status" value="1"/>
</dbReference>
<dbReference type="Pfam" id="PF02885">
    <property type="entry name" value="Glycos_trans_3N"/>
    <property type="match status" value="1"/>
</dbReference>
<dbReference type="Pfam" id="PF00591">
    <property type="entry name" value="Glycos_transf_3"/>
    <property type="match status" value="1"/>
</dbReference>
<dbReference type="Pfam" id="PF07831">
    <property type="entry name" value="PYNP_C"/>
    <property type="match status" value="1"/>
</dbReference>
<dbReference type="PIRSF" id="PIRSF000478">
    <property type="entry name" value="TP_PyNP"/>
    <property type="match status" value="1"/>
</dbReference>
<dbReference type="SMART" id="SM00941">
    <property type="entry name" value="PYNP_C"/>
    <property type="match status" value="1"/>
</dbReference>
<dbReference type="SUPFAM" id="SSF52418">
    <property type="entry name" value="Nucleoside phosphorylase/phosphoribosyltransferase catalytic domain"/>
    <property type="match status" value="1"/>
</dbReference>
<dbReference type="SUPFAM" id="SSF47648">
    <property type="entry name" value="Nucleoside phosphorylase/phosphoribosyltransferase N-terminal domain"/>
    <property type="match status" value="1"/>
</dbReference>
<dbReference type="SUPFAM" id="SSF54680">
    <property type="entry name" value="Pyrimidine nucleoside phosphorylase C-terminal domain"/>
    <property type="match status" value="1"/>
</dbReference>
<name>TYPH_RAT</name>
<proteinExistence type="evidence at protein level"/>